<name>HXA2_MOUSE</name>
<dbReference type="EMBL" id="M95599">
    <property type="protein sequence ID" value="AAA37827.1"/>
    <property type="molecule type" value="mRNA"/>
</dbReference>
<dbReference type="EMBL" id="M93148">
    <property type="protein sequence ID" value="AAA37835.1"/>
    <property type="molecule type" value="Genomic_DNA"/>
</dbReference>
<dbReference type="EMBL" id="M93292">
    <property type="protein sequence ID" value="AAA37836.1"/>
    <property type="molecule type" value="mRNA"/>
</dbReference>
<dbReference type="EMBL" id="BC117105">
    <property type="protein sequence ID" value="AAI17106.1"/>
    <property type="molecule type" value="mRNA"/>
</dbReference>
<dbReference type="EMBL" id="BC117107">
    <property type="protein sequence ID" value="AAI17108.1"/>
    <property type="molecule type" value="mRNA"/>
</dbReference>
<dbReference type="EMBL" id="M87801">
    <property type="protein sequence ID" value="AAA37834.1"/>
    <property type="molecule type" value="Genomic_DNA"/>
</dbReference>
<dbReference type="EMBL" id="AB039191">
    <property type="protein sequence ID" value="BAB68715.1"/>
    <property type="molecule type" value="Genomic_DNA"/>
</dbReference>
<dbReference type="CCDS" id="CCDS20139.1"/>
<dbReference type="PIR" id="A42694">
    <property type="entry name" value="A42694"/>
</dbReference>
<dbReference type="PIR" id="A46037">
    <property type="entry name" value="A46037"/>
</dbReference>
<dbReference type="RefSeq" id="NP_034581.1">
    <property type="nucleotide sequence ID" value="NM_010451.3"/>
</dbReference>
<dbReference type="SMR" id="P31245"/>
<dbReference type="BioGRID" id="200367">
    <property type="interactions" value="24"/>
</dbReference>
<dbReference type="FunCoup" id="P31245">
    <property type="interactions" value="1877"/>
</dbReference>
<dbReference type="IntAct" id="P31245">
    <property type="interactions" value="14"/>
</dbReference>
<dbReference type="STRING" id="10090.ENSMUSP00000014848"/>
<dbReference type="PhosphoSitePlus" id="P31245"/>
<dbReference type="PaxDb" id="10090-ENSMUSP00000014848"/>
<dbReference type="Antibodypedia" id="12364">
    <property type="antibodies" value="162 antibodies from 27 providers"/>
</dbReference>
<dbReference type="DNASU" id="15399"/>
<dbReference type="Ensembl" id="ENSMUST00000014848.11">
    <property type="protein sequence ID" value="ENSMUSP00000014848.9"/>
    <property type="gene ID" value="ENSMUSG00000014704.11"/>
</dbReference>
<dbReference type="GeneID" id="15399"/>
<dbReference type="KEGG" id="mmu:15399"/>
<dbReference type="UCSC" id="uc009bxz.2">
    <property type="organism name" value="mouse"/>
</dbReference>
<dbReference type="AGR" id="MGI:96174"/>
<dbReference type="CTD" id="3199"/>
<dbReference type="MGI" id="MGI:96174">
    <property type="gene designation" value="Hoxa2"/>
</dbReference>
<dbReference type="VEuPathDB" id="HostDB:ENSMUSG00000014704"/>
<dbReference type="eggNOG" id="KOG0489">
    <property type="taxonomic scope" value="Eukaryota"/>
</dbReference>
<dbReference type="GeneTree" id="ENSGT00940000162533"/>
<dbReference type="HOGENOM" id="CLU_048378_0_0_1"/>
<dbReference type="InParanoid" id="P31245"/>
<dbReference type="OMA" id="IHDFQPF"/>
<dbReference type="OrthoDB" id="6159439at2759"/>
<dbReference type="PhylomeDB" id="P31245"/>
<dbReference type="TreeFam" id="TF317730"/>
<dbReference type="BioGRID-ORCS" id="15399">
    <property type="hits" value="1 hit in 76 CRISPR screens"/>
</dbReference>
<dbReference type="PRO" id="PR:P31245"/>
<dbReference type="Proteomes" id="UP000000589">
    <property type="component" value="Chromosome 6"/>
</dbReference>
<dbReference type="RNAct" id="P31245">
    <property type="molecule type" value="protein"/>
</dbReference>
<dbReference type="Bgee" id="ENSMUSG00000014704">
    <property type="expression patterns" value="Expressed in pharyngeal arch 2 and 119 other cell types or tissues"/>
</dbReference>
<dbReference type="GO" id="GO:0005654">
    <property type="term" value="C:nucleoplasm"/>
    <property type="evidence" value="ECO:0000304"/>
    <property type="project" value="Reactome"/>
</dbReference>
<dbReference type="GO" id="GO:0005634">
    <property type="term" value="C:nucleus"/>
    <property type="evidence" value="ECO:0000314"/>
    <property type="project" value="MGI"/>
</dbReference>
<dbReference type="GO" id="GO:0001227">
    <property type="term" value="F:DNA-binding transcription repressor activity, RNA polymerase II-specific"/>
    <property type="evidence" value="ECO:0000314"/>
    <property type="project" value="NTNU_SB"/>
</dbReference>
<dbReference type="GO" id="GO:0000978">
    <property type="term" value="F:RNA polymerase II cis-regulatory region sequence-specific DNA binding"/>
    <property type="evidence" value="ECO:0000314"/>
    <property type="project" value="NTNU_SB"/>
</dbReference>
<dbReference type="GO" id="GO:0043565">
    <property type="term" value="F:sequence-specific DNA binding"/>
    <property type="evidence" value="ECO:0000314"/>
    <property type="project" value="MGI"/>
</dbReference>
<dbReference type="GO" id="GO:0009952">
    <property type="term" value="P:anterior/posterior pattern specification"/>
    <property type="evidence" value="ECO:0000315"/>
    <property type="project" value="MGI"/>
</dbReference>
<dbReference type="GO" id="GO:0035284">
    <property type="term" value="P:brain segmentation"/>
    <property type="evidence" value="ECO:0000315"/>
    <property type="project" value="MGI"/>
</dbReference>
<dbReference type="GO" id="GO:0045165">
    <property type="term" value="P:cell fate commitment"/>
    <property type="evidence" value="ECO:0000315"/>
    <property type="project" value="MGI"/>
</dbReference>
<dbReference type="GO" id="GO:0001709">
    <property type="term" value="P:cell fate determination"/>
    <property type="evidence" value="ECO:0000315"/>
    <property type="project" value="MGI"/>
</dbReference>
<dbReference type="GO" id="GO:0071300">
    <property type="term" value="P:cellular response to retinoic acid"/>
    <property type="evidence" value="ECO:0000314"/>
    <property type="project" value="MGI"/>
</dbReference>
<dbReference type="GO" id="GO:0009953">
    <property type="term" value="P:dorsal/ventral pattern formation"/>
    <property type="evidence" value="ECO:0000315"/>
    <property type="project" value="MGI"/>
</dbReference>
<dbReference type="GO" id="GO:0048706">
    <property type="term" value="P:embryonic skeletal system development"/>
    <property type="evidence" value="ECO:0000314"/>
    <property type="project" value="MGI"/>
</dbReference>
<dbReference type="GO" id="GO:0048704">
    <property type="term" value="P:embryonic skeletal system morphogenesis"/>
    <property type="evidence" value="ECO:0000316"/>
    <property type="project" value="MGI"/>
</dbReference>
<dbReference type="GO" id="GO:0048703">
    <property type="term" value="P:embryonic viscerocranium morphogenesis"/>
    <property type="evidence" value="ECO:0000315"/>
    <property type="project" value="MGI"/>
</dbReference>
<dbReference type="GO" id="GO:0042474">
    <property type="term" value="P:middle ear morphogenesis"/>
    <property type="evidence" value="ECO:0000315"/>
    <property type="project" value="MGI"/>
</dbReference>
<dbReference type="GO" id="GO:0008045">
    <property type="term" value="P:motor neuron axon guidance"/>
    <property type="evidence" value="ECO:0000315"/>
    <property type="project" value="MGI"/>
</dbReference>
<dbReference type="GO" id="GO:0061061">
    <property type="term" value="P:muscle structure development"/>
    <property type="evidence" value="ECO:0000314"/>
    <property type="project" value="MGI"/>
</dbReference>
<dbReference type="GO" id="GO:0045665">
    <property type="term" value="P:negative regulation of neuron differentiation"/>
    <property type="evidence" value="ECO:0000315"/>
    <property type="project" value="MGI"/>
</dbReference>
<dbReference type="GO" id="GO:0045668">
    <property type="term" value="P:negative regulation of osteoblast differentiation"/>
    <property type="evidence" value="ECO:0000314"/>
    <property type="project" value="MGI"/>
</dbReference>
<dbReference type="GO" id="GO:0000122">
    <property type="term" value="P:negative regulation of transcription by RNA polymerase II"/>
    <property type="evidence" value="ECO:0000314"/>
    <property type="project" value="MGI"/>
</dbReference>
<dbReference type="GO" id="GO:0030182">
    <property type="term" value="P:neuron differentiation"/>
    <property type="evidence" value="ECO:0000315"/>
    <property type="project" value="MGI"/>
</dbReference>
<dbReference type="GO" id="GO:0002076">
    <property type="term" value="P:osteoblast development"/>
    <property type="evidence" value="ECO:0000316"/>
    <property type="project" value="MGI"/>
</dbReference>
<dbReference type="GO" id="GO:0007389">
    <property type="term" value="P:pattern specification process"/>
    <property type="evidence" value="ECO:0000315"/>
    <property type="project" value="MGI"/>
</dbReference>
<dbReference type="GO" id="GO:0060037">
    <property type="term" value="P:pharyngeal system development"/>
    <property type="evidence" value="ECO:0000314"/>
    <property type="project" value="MGI"/>
</dbReference>
<dbReference type="GO" id="GO:0045944">
    <property type="term" value="P:positive regulation of transcription by RNA polymerase II"/>
    <property type="evidence" value="ECO:0000314"/>
    <property type="project" value="MGI"/>
</dbReference>
<dbReference type="GO" id="GO:0021568">
    <property type="term" value="P:rhombomere 2 development"/>
    <property type="evidence" value="ECO:0000315"/>
    <property type="project" value="MGI"/>
</dbReference>
<dbReference type="GO" id="GO:0021569">
    <property type="term" value="P:rhombomere 3 development"/>
    <property type="evidence" value="ECO:0000316"/>
    <property type="project" value="MGI"/>
</dbReference>
<dbReference type="GO" id="GO:0021658">
    <property type="term" value="P:rhombomere 3 morphogenesis"/>
    <property type="evidence" value="ECO:0000315"/>
    <property type="project" value="MGI"/>
</dbReference>
<dbReference type="GO" id="GO:0007379">
    <property type="term" value="P:segment specification"/>
    <property type="evidence" value="ECO:0000315"/>
    <property type="project" value="MGI"/>
</dbReference>
<dbReference type="CDD" id="cd00086">
    <property type="entry name" value="homeodomain"/>
    <property type="match status" value="1"/>
</dbReference>
<dbReference type="FunFam" id="1.10.10.60:FF:000145">
    <property type="entry name" value="homeobox protein Hox-A2"/>
    <property type="match status" value="1"/>
</dbReference>
<dbReference type="Gene3D" id="1.10.10.60">
    <property type="entry name" value="Homeodomain-like"/>
    <property type="match status" value="1"/>
</dbReference>
<dbReference type="InterPro" id="IPR001356">
    <property type="entry name" value="HD"/>
</dbReference>
<dbReference type="InterPro" id="IPR020479">
    <property type="entry name" value="HD_metazoa"/>
</dbReference>
<dbReference type="InterPro" id="IPR001827">
    <property type="entry name" value="Homeobox_Antennapedia_CS"/>
</dbReference>
<dbReference type="InterPro" id="IPR017970">
    <property type="entry name" value="Homeobox_CS"/>
</dbReference>
<dbReference type="InterPro" id="IPR009057">
    <property type="entry name" value="Homeodomain-like_sf"/>
</dbReference>
<dbReference type="PANTHER" id="PTHR45664:SF3">
    <property type="entry name" value="HOMEOBOX PROTEIN HOX-A2"/>
    <property type="match status" value="1"/>
</dbReference>
<dbReference type="PANTHER" id="PTHR45664">
    <property type="entry name" value="PROTEIN ZERKNUELLT 1-RELATED"/>
    <property type="match status" value="1"/>
</dbReference>
<dbReference type="Pfam" id="PF00046">
    <property type="entry name" value="Homeodomain"/>
    <property type="match status" value="1"/>
</dbReference>
<dbReference type="PRINTS" id="PR00024">
    <property type="entry name" value="HOMEOBOX"/>
</dbReference>
<dbReference type="SMART" id="SM00389">
    <property type="entry name" value="HOX"/>
    <property type="match status" value="1"/>
</dbReference>
<dbReference type="SUPFAM" id="SSF46689">
    <property type="entry name" value="Homeodomain-like"/>
    <property type="match status" value="1"/>
</dbReference>
<dbReference type="PROSITE" id="PS00032">
    <property type="entry name" value="ANTENNAPEDIA"/>
    <property type="match status" value="1"/>
</dbReference>
<dbReference type="PROSITE" id="PS00027">
    <property type="entry name" value="HOMEOBOX_1"/>
    <property type="match status" value="1"/>
</dbReference>
<dbReference type="PROSITE" id="PS50071">
    <property type="entry name" value="HOMEOBOX_2"/>
    <property type="match status" value="1"/>
</dbReference>
<accession>P31245</accession>
<accession>Q149U3</accession>
<accession>Q920T8</accession>
<reference key="1">
    <citation type="submission" date="1992-10" db="EMBL/GenBank/DDBJ databases">
        <title>Cloning of mouse Hox 1-11.</title>
        <authorList>
            <person name="Gridley T."/>
        </authorList>
    </citation>
    <scope>NUCLEOTIDE SEQUENCE [MRNA]</scope>
</reference>
<reference key="2">
    <citation type="journal article" date="1992" name="Proc. Natl. Acad. Sci. U.S.A.">
        <title>Murine Hox-1.11 homeobox gene structure and expression.</title>
        <authorList>
            <person name="Tan D.P."/>
            <person name="Ferrante J."/>
            <person name="Nazarali A."/>
            <person name="Shao X."/>
            <person name="Kozak C.A."/>
            <person name="Guo V."/>
            <person name="Nirenberg M."/>
        </authorList>
    </citation>
    <scope>NUCLEOTIDE SEQUENCE [GENOMIC DNA / MRNA]</scope>
    <source>
        <strain>ICR X Swiss Webster</strain>
    </source>
</reference>
<reference key="3">
    <citation type="journal article" date="2004" name="Genome Res.">
        <title>The status, quality, and expansion of the NIH full-length cDNA project: the Mammalian Gene Collection (MGC).</title>
        <authorList>
            <consortium name="The MGC Project Team"/>
        </authorList>
    </citation>
    <scope>NUCLEOTIDE SEQUENCE [LARGE SCALE MRNA]</scope>
    <source>
        <tissue>Thymus</tissue>
    </source>
</reference>
<reference key="4">
    <citation type="journal article" date="1992" name="Proc. Natl. Acad. Sci. U.S.A.">
        <title>Hox-1.11 and Hox-4.9 homeobox genes.</title>
        <authorList>
            <person name="Nazarali A."/>
            <person name="Kim Y."/>
            <person name="Nirenberg M."/>
        </authorList>
    </citation>
    <scope>NUCLEOTIDE SEQUENCE [GENOMIC DNA] OF 128-231</scope>
    <source>
        <strain>ICR X Swiss Webster</strain>
    </source>
</reference>
<reference key="5">
    <citation type="submission" date="2000-02" db="EMBL/GenBank/DDBJ databases">
        <title>Conspicuous differences among gene genealogies of 21 nuclear genes of five Mus musculus subspecies.</title>
        <authorList>
            <person name="Liu Y."/>
            <person name="Kitano T."/>
            <person name="Koide T."/>
            <person name="Shiroishi T."/>
            <person name="Moriwaki K."/>
            <person name="Saitou N."/>
        </authorList>
    </citation>
    <scope>NUCLEOTIDE SEQUENCE [GENOMIC DNA] OF 127-372</scope>
    <source>
        <strain>HMI/Msf</strain>
    </source>
</reference>
<feature type="chain" id="PRO_0000200037" description="Homeobox protein Hox-A2">
    <location>
        <begin position="1"/>
        <end position="372"/>
    </location>
</feature>
<feature type="DNA-binding region" description="Homeobox" evidence="1">
    <location>
        <begin position="139"/>
        <end position="198"/>
    </location>
</feature>
<feature type="region of interest" description="Disordered" evidence="2">
    <location>
        <begin position="48"/>
        <end position="95"/>
    </location>
</feature>
<feature type="region of interest" description="Disordered" evidence="2">
    <location>
        <begin position="194"/>
        <end position="225"/>
    </location>
</feature>
<feature type="short sequence motif" description="Antp-type hexapeptide">
    <location>
        <begin position="96"/>
        <end position="101"/>
    </location>
</feature>
<comment type="function">
    <text>Sequence-specific transcription factor which is part of a developmental regulatory system that provides cells with specific positional identities on the anterior-posterior axis.</text>
</comment>
<comment type="subcellular location">
    <subcellularLocation>
        <location>Nucleus</location>
    </subcellularLocation>
</comment>
<comment type="similarity">
    <text evidence="3">Belongs to the Antp homeobox family. Proboscipedia subfamily.</text>
</comment>
<keyword id="KW-0217">Developmental protein</keyword>
<keyword id="KW-0238">DNA-binding</keyword>
<keyword id="KW-0371">Homeobox</keyword>
<keyword id="KW-0539">Nucleus</keyword>
<keyword id="KW-1185">Reference proteome</keyword>
<keyword id="KW-0804">Transcription</keyword>
<keyword id="KW-0805">Transcription regulation</keyword>
<protein>
    <recommendedName>
        <fullName>Homeobox protein Hox-A2</fullName>
    </recommendedName>
    <alternativeName>
        <fullName>Homeobox protein Hox-1.11</fullName>
        <shortName>Hox1.11</shortName>
    </alternativeName>
</protein>
<sequence length="372" mass="40793">MNYEFEREIGFINSQPSLAECLTSFPPVADTFQSSSIKTSTLSHSTLIPPPFEQTIPSLNPGSHPRHGAGVGGRPKSSPAGSRGSPVPAGALQPPEYPWMKEKKAAKKTALPPAAASTGPACLGHKESLEIADGSGGGSRRLRTAYTNTQLLELEKEFHFNKYLCRPRRVEIAALLDLTERQVKVWFQNRRMKHKRQTQCKENQNSEGKFKNLEDSDKVEEDEEEKSLFEQALSVSGALLEREGYTFQQNALSQQQAPNGHNGDSQTFPVSPLTSNEKNLKHFQHQSPTVPNCLSTMGQNCGAGLNNDSPEAIEVPSLQDFNVFSTDSCLQLSDALSPSLPGSLDSPVDISADSFDFFTDTLTTIDLQHLNY</sequence>
<proteinExistence type="evidence at transcript level"/>
<gene>
    <name type="primary">Hoxa2</name>
    <name type="synonym">Hox-1.11</name>
    <name type="synonym">Hoxa-2</name>
</gene>
<organism>
    <name type="scientific">Mus musculus</name>
    <name type="common">Mouse</name>
    <dbReference type="NCBI Taxonomy" id="10090"/>
    <lineage>
        <taxon>Eukaryota</taxon>
        <taxon>Metazoa</taxon>
        <taxon>Chordata</taxon>
        <taxon>Craniata</taxon>
        <taxon>Vertebrata</taxon>
        <taxon>Euteleostomi</taxon>
        <taxon>Mammalia</taxon>
        <taxon>Eutheria</taxon>
        <taxon>Euarchontoglires</taxon>
        <taxon>Glires</taxon>
        <taxon>Rodentia</taxon>
        <taxon>Myomorpha</taxon>
        <taxon>Muroidea</taxon>
        <taxon>Muridae</taxon>
        <taxon>Murinae</taxon>
        <taxon>Mus</taxon>
        <taxon>Mus</taxon>
    </lineage>
</organism>
<evidence type="ECO:0000255" key="1">
    <source>
        <dbReference type="PROSITE-ProRule" id="PRU00108"/>
    </source>
</evidence>
<evidence type="ECO:0000256" key="2">
    <source>
        <dbReference type="SAM" id="MobiDB-lite"/>
    </source>
</evidence>
<evidence type="ECO:0000305" key="3"/>